<reference key="1">
    <citation type="journal article" date="2005" name="Science">
        <title>Extensive DNA inversions in the B. fragilis genome control variable gene expression.</title>
        <authorList>
            <person name="Cerdeno-Tarraga A.-M."/>
            <person name="Patrick S."/>
            <person name="Crossman L.C."/>
            <person name="Blakely G."/>
            <person name="Abratt V."/>
            <person name="Lennard N."/>
            <person name="Poxton I."/>
            <person name="Duerden B."/>
            <person name="Harris B."/>
            <person name="Quail M.A."/>
            <person name="Barron A."/>
            <person name="Clark L."/>
            <person name="Corton C."/>
            <person name="Doggett J."/>
            <person name="Holden M.T.G."/>
            <person name="Larke N."/>
            <person name="Line A."/>
            <person name="Lord A."/>
            <person name="Norbertczak H."/>
            <person name="Ormond D."/>
            <person name="Price C."/>
            <person name="Rabbinowitsch E."/>
            <person name="Woodward J."/>
            <person name="Barrell B.G."/>
            <person name="Parkhill J."/>
        </authorList>
    </citation>
    <scope>NUCLEOTIDE SEQUENCE [LARGE SCALE GENOMIC DNA]</scope>
    <source>
        <strain>ATCC 25285 / DSM 2151 / CCUG 4856 / JCM 11019 / LMG 10263 / NCTC 9343 / Onslow / VPI 2553 / EN-2</strain>
    </source>
</reference>
<gene>
    <name evidence="1" type="primary">rpmE2</name>
    <name type="synonym">rpmE</name>
    <name type="ordered locus">BF3140</name>
</gene>
<sequence>MKKGLHPESYRPVVFKDMSNGDMFLSKSTVATKETIEFEGETYPLLKIEISNTSHPFYTGKSTLVDTAGRVDKFMSRYGNRKK</sequence>
<keyword id="KW-0687">Ribonucleoprotein</keyword>
<keyword id="KW-0689">Ribosomal protein</keyword>
<comment type="subunit">
    <text evidence="1">Part of the 50S ribosomal subunit.</text>
</comment>
<comment type="similarity">
    <text evidence="1">Belongs to the bacterial ribosomal protein bL31 family. Type B subfamily.</text>
</comment>
<evidence type="ECO:0000255" key="1">
    <source>
        <dbReference type="HAMAP-Rule" id="MF_00502"/>
    </source>
</evidence>
<evidence type="ECO:0000305" key="2"/>
<name>RL31B_BACFN</name>
<proteinExistence type="inferred from homology"/>
<organism>
    <name type="scientific">Bacteroides fragilis (strain ATCC 25285 / DSM 2151 / CCUG 4856 / JCM 11019 / LMG 10263 / NCTC 9343 / Onslow / VPI 2553 / EN-2)</name>
    <dbReference type="NCBI Taxonomy" id="272559"/>
    <lineage>
        <taxon>Bacteria</taxon>
        <taxon>Pseudomonadati</taxon>
        <taxon>Bacteroidota</taxon>
        <taxon>Bacteroidia</taxon>
        <taxon>Bacteroidales</taxon>
        <taxon>Bacteroidaceae</taxon>
        <taxon>Bacteroides</taxon>
    </lineage>
</organism>
<dbReference type="EMBL" id="CR626927">
    <property type="protein sequence ID" value="CAH08835.1"/>
    <property type="molecule type" value="Genomic_DNA"/>
</dbReference>
<dbReference type="RefSeq" id="WP_005789565.1">
    <property type="nucleotide sequence ID" value="NZ_UFTH01000001.1"/>
</dbReference>
<dbReference type="SMR" id="Q5LAN8"/>
<dbReference type="PaxDb" id="272559-BF9343_3054"/>
<dbReference type="KEGG" id="bfs:BF9343_3054"/>
<dbReference type="eggNOG" id="COG0254">
    <property type="taxonomic scope" value="Bacteria"/>
</dbReference>
<dbReference type="HOGENOM" id="CLU_114306_2_2_10"/>
<dbReference type="Proteomes" id="UP000006731">
    <property type="component" value="Chromosome"/>
</dbReference>
<dbReference type="GO" id="GO:1990904">
    <property type="term" value="C:ribonucleoprotein complex"/>
    <property type="evidence" value="ECO:0007669"/>
    <property type="project" value="UniProtKB-KW"/>
</dbReference>
<dbReference type="GO" id="GO:0005840">
    <property type="term" value="C:ribosome"/>
    <property type="evidence" value="ECO:0007669"/>
    <property type="project" value="UniProtKB-KW"/>
</dbReference>
<dbReference type="GO" id="GO:0003735">
    <property type="term" value="F:structural constituent of ribosome"/>
    <property type="evidence" value="ECO:0007669"/>
    <property type="project" value="InterPro"/>
</dbReference>
<dbReference type="GO" id="GO:0006412">
    <property type="term" value="P:translation"/>
    <property type="evidence" value="ECO:0007669"/>
    <property type="project" value="UniProtKB-UniRule"/>
</dbReference>
<dbReference type="Gene3D" id="4.10.830.30">
    <property type="entry name" value="Ribosomal protein L31"/>
    <property type="match status" value="1"/>
</dbReference>
<dbReference type="HAMAP" id="MF_00502">
    <property type="entry name" value="Ribosomal_bL31_2"/>
    <property type="match status" value="1"/>
</dbReference>
<dbReference type="InterPro" id="IPR034704">
    <property type="entry name" value="Ribosomal_bL28/bL31-like_sf"/>
</dbReference>
<dbReference type="InterPro" id="IPR002150">
    <property type="entry name" value="Ribosomal_bL31"/>
</dbReference>
<dbReference type="InterPro" id="IPR027493">
    <property type="entry name" value="Ribosomal_bL31_B"/>
</dbReference>
<dbReference type="InterPro" id="IPR042105">
    <property type="entry name" value="Ribosomal_bL31_sf"/>
</dbReference>
<dbReference type="NCBIfam" id="TIGR00105">
    <property type="entry name" value="L31"/>
    <property type="match status" value="1"/>
</dbReference>
<dbReference type="NCBIfam" id="NF002462">
    <property type="entry name" value="PRK01678.1"/>
    <property type="match status" value="1"/>
</dbReference>
<dbReference type="PANTHER" id="PTHR33280">
    <property type="entry name" value="50S RIBOSOMAL PROTEIN L31, CHLOROPLASTIC"/>
    <property type="match status" value="1"/>
</dbReference>
<dbReference type="PANTHER" id="PTHR33280:SF1">
    <property type="entry name" value="LARGE RIBOSOMAL SUBUNIT PROTEIN BL31C"/>
    <property type="match status" value="1"/>
</dbReference>
<dbReference type="Pfam" id="PF01197">
    <property type="entry name" value="Ribosomal_L31"/>
    <property type="match status" value="1"/>
</dbReference>
<dbReference type="PRINTS" id="PR01249">
    <property type="entry name" value="RIBOSOMALL31"/>
</dbReference>
<dbReference type="SUPFAM" id="SSF143800">
    <property type="entry name" value="L28p-like"/>
    <property type="match status" value="1"/>
</dbReference>
<dbReference type="PROSITE" id="PS01143">
    <property type="entry name" value="RIBOSOMAL_L31"/>
    <property type="match status" value="1"/>
</dbReference>
<accession>Q5LAN8</accession>
<feature type="chain" id="PRO_0000173198" description="Large ribosomal subunit protein bL31B">
    <location>
        <begin position="1"/>
        <end position="83"/>
    </location>
</feature>
<protein>
    <recommendedName>
        <fullName evidence="1">Large ribosomal subunit protein bL31B</fullName>
    </recommendedName>
    <alternativeName>
        <fullName evidence="2">50S ribosomal protein L31 type B</fullName>
    </alternativeName>
</protein>